<sequence length="252" mass="25878">MAESKLVIGDRSFASRLIMGTGGATNLAVLEQALIASGTELTTVAIRRVDADGGTGLLDLLNRLGITPLPNTAGSRSAAEAVLTAQLAREALNTNWVKLEVIADERTLWPDAVELVRAAEQLVDDGFVVLPYTTDDPVLARRLEDTGCAAVMPLGSPIGTGLGIANPHNIEMIVAGARVPVVLDAGIGTASDAALAMELGCDAVLLASAVTRAADPPAMAAAMAAAVTAGYLARCAGRIPKRFWAQASSPAR</sequence>
<feature type="chain" id="PRO_0000162832" description="Thiazole synthase">
    <location>
        <begin position="1"/>
        <end position="252"/>
    </location>
</feature>
<feature type="active site" description="Schiff-base intermediate with DXP" evidence="1">
    <location>
        <position position="98"/>
    </location>
</feature>
<feature type="binding site" evidence="1">
    <location>
        <position position="159"/>
    </location>
    <ligand>
        <name>1-deoxy-D-xylulose 5-phosphate</name>
        <dbReference type="ChEBI" id="CHEBI:57792"/>
    </ligand>
</feature>
<feature type="binding site" evidence="1">
    <location>
        <begin position="185"/>
        <end position="186"/>
    </location>
    <ligand>
        <name>1-deoxy-D-xylulose 5-phosphate</name>
        <dbReference type="ChEBI" id="CHEBI:57792"/>
    </ligand>
</feature>
<feature type="binding site" evidence="1">
    <location>
        <begin position="207"/>
        <end position="208"/>
    </location>
    <ligand>
        <name>1-deoxy-D-xylulose 5-phosphate</name>
        <dbReference type="ChEBI" id="CHEBI:57792"/>
    </ligand>
</feature>
<feature type="strand" evidence="2">
    <location>
        <begin position="6"/>
        <end position="8"/>
    </location>
</feature>
<feature type="strand" evidence="2">
    <location>
        <begin position="11"/>
        <end position="14"/>
    </location>
</feature>
<feature type="strand" evidence="2">
    <location>
        <begin position="17"/>
        <end position="20"/>
    </location>
</feature>
<feature type="helix" evidence="2">
    <location>
        <begin position="27"/>
        <end position="37"/>
    </location>
</feature>
<feature type="strand" evidence="2">
    <location>
        <begin position="40"/>
        <end position="45"/>
    </location>
</feature>
<feature type="helix" evidence="2">
    <location>
        <begin position="57"/>
        <end position="64"/>
    </location>
</feature>
<feature type="strand" evidence="2">
    <location>
        <begin position="67"/>
        <end position="71"/>
    </location>
</feature>
<feature type="helix" evidence="2">
    <location>
        <begin position="78"/>
        <end position="92"/>
    </location>
</feature>
<feature type="strand" evidence="2">
    <location>
        <begin position="96"/>
        <end position="99"/>
    </location>
</feature>
<feature type="turn" evidence="2">
    <location>
        <begin position="105"/>
        <end position="107"/>
    </location>
</feature>
<feature type="helix" evidence="2">
    <location>
        <begin position="112"/>
        <end position="124"/>
    </location>
</feature>
<feature type="strand" evidence="2">
    <location>
        <begin position="128"/>
        <end position="133"/>
    </location>
</feature>
<feature type="helix" evidence="2">
    <location>
        <begin position="137"/>
        <end position="146"/>
    </location>
</feature>
<feature type="strand" evidence="2">
    <location>
        <begin position="151"/>
        <end position="153"/>
    </location>
</feature>
<feature type="strand" evidence="2">
    <location>
        <begin position="155"/>
        <end position="157"/>
    </location>
</feature>
<feature type="helix" evidence="2">
    <location>
        <begin position="167"/>
        <end position="175"/>
    </location>
</feature>
<feature type="strand" evidence="2">
    <location>
        <begin position="181"/>
        <end position="183"/>
    </location>
</feature>
<feature type="helix" evidence="2">
    <location>
        <begin position="190"/>
        <end position="198"/>
    </location>
</feature>
<feature type="strand" evidence="2">
    <location>
        <begin position="202"/>
        <end position="207"/>
    </location>
</feature>
<feature type="helix" evidence="2">
    <location>
        <begin position="208"/>
        <end position="211"/>
    </location>
</feature>
<feature type="strand" evidence="2">
    <location>
        <begin position="213"/>
        <end position="215"/>
    </location>
</feature>
<feature type="helix" evidence="2">
    <location>
        <begin position="216"/>
        <end position="236"/>
    </location>
</feature>
<accession>P9WG73</accession>
<accession>L0T6E5</accession>
<accession>P96263</accession>
<proteinExistence type="evidence at protein level"/>
<gene>
    <name evidence="1" type="primary">thiG</name>
    <name type="ordered locus">Rv0417</name>
    <name type="ORF">MTCY22G10.14</name>
</gene>
<comment type="function">
    <text evidence="1">Catalyzes the rearrangement of 1-deoxy-D-xylulose 5-phosphate (DXP) to produce the thiazole phosphate moiety of thiamine. Sulfur is provided by the thiocarboxylate moiety of the carrier protein ThiS. In vitro, sulfur can be provided by H(2)S.</text>
</comment>
<comment type="catalytic activity">
    <reaction evidence="1">
        <text>[ThiS sulfur-carrier protein]-C-terminal-Gly-aminoethanethioate + 2-iminoacetate + 1-deoxy-D-xylulose 5-phosphate = [ThiS sulfur-carrier protein]-C-terminal Gly-Gly + 2-[(2R,5Z)-2-carboxy-4-methylthiazol-5(2H)-ylidene]ethyl phosphate + 2 H2O + H(+)</text>
        <dbReference type="Rhea" id="RHEA:26297"/>
        <dbReference type="Rhea" id="RHEA-COMP:12909"/>
        <dbReference type="Rhea" id="RHEA-COMP:19908"/>
        <dbReference type="ChEBI" id="CHEBI:15377"/>
        <dbReference type="ChEBI" id="CHEBI:15378"/>
        <dbReference type="ChEBI" id="CHEBI:57792"/>
        <dbReference type="ChEBI" id="CHEBI:62899"/>
        <dbReference type="ChEBI" id="CHEBI:77846"/>
        <dbReference type="ChEBI" id="CHEBI:90778"/>
        <dbReference type="ChEBI" id="CHEBI:232372"/>
        <dbReference type="EC" id="2.8.1.10"/>
    </reaction>
</comment>
<comment type="pathway">
    <text evidence="1">Cofactor biosynthesis; thiamine diphosphate biosynthesis.</text>
</comment>
<comment type="subunit">
    <text evidence="1">Homotetramer. Forms heterodimers with either ThiH or ThiS.</text>
</comment>
<comment type="subcellular location">
    <subcellularLocation>
        <location evidence="1">Cytoplasm</location>
    </subcellularLocation>
</comment>
<comment type="similarity">
    <text evidence="1">Belongs to the ThiG family.</text>
</comment>
<organism>
    <name type="scientific">Mycobacterium tuberculosis (strain ATCC 25618 / H37Rv)</name>
    <dbReference type="NCBI Taxonomy" id="83332"/>
    <lineage>
        <taxon>Bacteria</taxon>
        <taxon>Bacillati</taxon>
        <taxon>Actinomycetota</taxon>
        <taxon>Actinomycetes</taxon>
        <taxon>Mycobacteriales</taxon>
        <taxon>Mycobacteriaceae</taxon>
        <taxon>Mycobacterium</taxon>
        <taxon>Mycobacterium tuberculosis complex</taxon>
    </lineage>
</organism>
<evidence type="ECO:0000255" key="1">
    <source>
        <dbReference type="HAMAP-Rule" id="MF_00443"/>
    </source>
</evidence>
<evidence type="ECO:0007829" key="2">
    <source>
        <dbReference type="PDB" id="5Z9Y"/>
    </source>
</evidence>
<protein>
    <recommendedName>
        <fullName evidence="1">Thiazole synthase</fullName>
        <ecNumber evidence="1">2.8.1.10</ecNumber>
    </recommendedName>
</protein>
<reference key="1">
    <citation type="journal article" date="1998" name="Nature">
        <title>Deciphering the biology of Mycobacterium tuberculosis from the complete genome sequence.</title>
        <authorList>
            <person name="Cole S.T."/>
            <person name="Brosch R."/>
            <person name="Parkhill J."/>
            <person name="Garnier T."/>
            <person name="Churcher C.M."/>
            <person name="Harris D.E."/>
            <person name="Gordon S.V."/>
            <person name="Eiglmeier K."/>
            <person name="Gas S."/>
            <person name="Barry C.E. III"/>
            <person name="Tekaia F."/>
            <person name="Badcock K."/>
            <person name="Basham D."/>
            <person name="Brown D."/>
            <person name="Chillingworth T."/>
            <person name="Connor R."/>
            <person name="Davies R.M."/>
            <person name="Devlin K."/>
            <person name="Feltwell T."/>
            <person name="Gentles S."/>
            <person name="Hamlin N."/>
            <person name="Holroyd S."/>
            <person name="Hornsby T."/>
            <person name="Jagels K."/>
            <person name="Krogh A."/>
            <person name="McLean J."/>
            <person name="Moule S."/>
            <person name="Murphy L.D."/>
            <person name="Oliver S."/>
            <person name="Osborne J."/>
            <person name="Quail M.A."/>
            <person name="Rajandream M.A."/>
            <person name="Rogers J."/>
            <person name="Rutter S."/>
            <person name="Seeger K."/>
            <person name="Skelton S."/>
            <person name="Squares S."/>
            <person name="Squares R."/>
            <person name="Sulston J.E."/>
            <person name="Taylor K."/>
            <person name="Whitehead S."/>
            <person name="Barrell B.G."/>
        </authorList>
    </citation>
    <scope>NUCLEOTIDE SEQUENCE [LARGE SCALE GENOMIC DNA]</scope>
    <source>
        <strain>ATCC 25618 / H37Rv</strain>
    </source>
</reference>
<reference key="2">
    <citation type="journal article" date="2011" name="Mol. Cell. Proteomics">
        <title>Proteogenomic analysis of Mycobacterium tuberculosis by high resolution mass spectrometry.</title>
        <authorList>
            <person name="Kelkar D.S."/>
            <person name="Kumar D."/>
            <person name="Kumar P."/>
            <person name="Balakrishnan L."/>
            <person name="Muthusamy B."/>
            <person name="Yadav A.K."/>
            <person name="Shrivastava P."/>
            <person name="Marimuthu A."/>
            <person name="Anand S."/>
            <person name="Sundaram H."/>
            <person name="Kingsbury R."/>
            <person name="Harsha H.C."/>
            <person name="Nair B."/>
            <person name="Prasad T.S."/>
            <person name="Chauhan D.S."/>
            <person name="Katoch K."/>
            <person name="Katoch V.M."/>
            <person name="Kumar P."/>
            <person name="Chaerkady R."/>
            <person name="Ramachandran S."/>
            <person name="Dash D."/>
            <person name="Pandey A."/>
        </authorList>
    </citation>
    <scope>IDENTIFICATION BY MASS SPECTROMETRY [LARGE SCALE ANALYSIS]</scope>
    <source>
        <strain>ATCC 25618 / H37Rv</strain>
    </source>
</reference>
<name>THIG_MYCTU</name>
<dbReference type="EC" id="2.8.1.10" evidence="1"/>
<dbReference type="EMBL" id="AL123456">
    <property type="protein sequence ID" value="CCP43148.1"/>
    <property type="molecule type" value="Genomic_DNA"/>
</dbReference>
<dbReference type="PIR" id="G70629">
    <property type="entry name" value="G70629"/>
</dbReference>
<dbReference type="RefSeq" id="NP_214931.1">
    <property type="nucleotide sequence ID" value="NC_000962.3"/>
</dbReference>
<dbReference type="RefSeq" id="WP_003916659.1">
    <property type="nucleotide sequence ID" value="NZ_NVQJ01000002.1"/>
</dbReference>
<dbReference type="PDB" id="5Z9Y">
    <property type="method" value="X-ray"/>
    <property type="resolution" value="1.48 A"/>
    <property type="chains" value="A/B=2-252"/>
</dbReference>
<dbReference type="PDBsum" id="5Z9Y"/>
<dbReference type="SMR" id="P9WG73"/>
<dbReference type="FunCoup" id="P9WG73">
    <property type="interactions" value="141"/>
</dbReference>
<dbReference type="STRING" id="83332.Rv0417"/>
<dbReference type="PaxDb" id="83332-Rv0417"/>
<dbReference type="DNASU" id="886396"/>
<dbReference type="GeneID" id="886396"/>
<dbReference type="KEGG" id="mtu:Rv0417"/>
<dbReference type="KEGG" id="mtv:RVBD_0417"/>
<dbReference type="TubercuList" id="Rv0417"/>
<dbReference type="eggNOG" id="COG2022">
    <property type="taxonomic scope" value="Bacteria"/>
</dbReference>
<dbReference type="InParanoid" id="P9WG73"/>
<dbReference type="OrthoDB" id="9805935at2"/>
<dbReference type="PhylomeDB" id="P9WG73"/>
<dbReference type="UniPathway" id="UPA00060"/>
<dbReference type="Proteomes" id="UP000001584">
    <property type="component" value="Chromosome"/>
</dbReference>
<dbReference type="GO" id="GO:1902508">
    <property type="term" value="C:2-iminoacetate synthase complex"/>
    <property type="evidence" value="ECO:0000318"/>
    <property type="project" value="GO_Central"/>
</dbReference>
<dbReference type="GO" id="GO:0005737">
    <property type="term" value="C:cytoplasm"/>
    <property type="evidence" value="ECO:0007669"/>
    <property type="project" value="UniProtKB-SubCell"/>
</dbReference>
<dbReference type="GO" id="GO:1990107">
    <property type="term" value="F:thiazole synthase activity"/>
    <property type="evidence" value="ECO:0007669"/>
    <property type="project" value="UniProtKB-EC"/>
</dbReference>
<dbReference type="GO" id="GO:0009228">
    <property type="term" value="P:thiamine biosynthetic process"/>
    <property type="evidence" value="ECO:0000318"/>
    <property type="project" value="GO_Central"/>
</dbReference>
<dbReference type="GO" id="GO:0009229">
    <property type="term" value="P:thiamine diphosphate biosynthetic process"/>
    <property type="evidence" value="ECO:0000318"/>
    <property type="project" value="GO_Central"/>
</dbReference>
<dbReference type="CDD" id="cd04728">
    <property type="entry name" value="ThiG"/>
    <property type="match status" value="1"/>
</dbReference>
<dbReference type="Gene3D" id="3.20.20.70">
    <property type="entry name" value="Aldolase class I"/>
    <property type="match status" value="1"/>
</dbReference>
<dbReference type="HAMAP" id="MF_00443">
    <property type="entry name" value="ThiG"/>
    <property type="match status" value="1"/>
</dbReference>
<dbReference type="InterPro" id="IPR013785">
    <property type="entry name" value="Aldolase_TIM"/>
</dbReference>
<dbReference type="InterPro" id="IPR033983">
    <property type="entry name" value="Thiazole_synthase_ThiG"/>
</dbReference>
<dbReference type="InterPro" id="IPR008867">
    <property type="entry name" value="ThiG"/>
</dbReference>
<dbReference type="PANTHER" id="PTHR34266">
    <property type="entry name" value="THIAZOLE SYNTHASE"/>
    <property type="match status" value="1"/>
</dbReference>
<dbReference type="PANTHER" id="PTHR34266:SF2">
    <property type="entry name" value="THIAZOLE SYNTHASE"/>
    <property type="match status" value="1"/>
</dbReference>
<dbReference type="Pfam" id="PF05690">
    <property type="entry name" value="ThiG"/>
    <property type="match status" value="1"/>
</dbReference>
<dbReference type="SUPFAM" id="SSF110399">
    <property type="entry name" value="ThiG-like"/>
    <property type="match status" value="1"/>
</dbReference>
<keyword id="KW-0002">3D-structure</keyword>
<keyword id="KW-0963">Cytoplasm</keyword>
<keyword id="KW-1185">Reference proteome</keyword>
<keyword id="KW-0704">Schiff base</keyword>
<keyword id="KW-0784">Thiamine biosynthesis</keyword>
<keyword id="KW-0808">Transferase</keyword>